<feature type="chain" id="PRO_0000089422" description="Cycloeucalenol cycloisomerase">
    <location>
        <begin position="1"/>
        <end position="280"/>
    </location>
</feature>
<feature type="transmembrane region" description="Helical" evidence="1">
    <location>
        <begin position="22"/>
        <end position="42"/>
    </location>
</feature>
<feature type="transmembrane region" description="Helical" evidence="1">
    <location>
        <begin position="53"/>
        <end position="73"/>
    </location>
</feature>
<feature type="transmembrane region" description="Helical" evidence="1">
    <location>
        <begin position="89"/>
        <end position="109"/>
    </location>
</feature>
<feature type="transmembrane region" description="Helical" evidence="1">
    <location>
        <begin position="167"/>
        <end position="187"/>
    </location>
</feature>
<feature type="transmembrane region" description="Helical" evidence="1">
    <location>
        <begin position="201"/>
        <end position="221"/>
    </location>
</feature>
<feature type="transmembrane region" description="Helical" evidence="1">
    <location>
        <begin position="244"/>
        <end position="264"/>
    </location>
</feature>
<name>CCI1_ARATH</name>
<organism>
    <name type="scientific">Arabidopsis thaliana</name>
    <name type="common">Mouse-ear cress</name>
    <dbReference type="NCBI Taxonomy" id="3702"/>
    <lineage>
        <taxon>Eukaryota</taxon>
        <taxon>Viridiplantae</taxon>
        <taxon>Streptophyta</taxon>
        <taxon>Embryophyta</taxon>
        <taxon>Tracheophyta</taxon>
        <taxon>Spermatophyta</taxon>
        <taxon>Magnoliopsida</taxon>
        <taxon>eudicotyledons</taxon>
        <taxon>Gunneridae</taxon>
        <taxon>Pentapetalae</taxon>
        <taxon>rosids</taxon>
        <taxon>malvids</taxon>
        <taxon>Brassicales</taxon>
        <taxon>Brassicaceae</taxon>
        <taxon>Camelineae</taxon>
        <taxon>Arabidopsis</taxon>
    </lineage>
</organism>
<evidence type="ECO:0000255" key="1"/>
<comment type="function">
    <text>Converts pentacyclic cyclopropyl sterols to tetracyclic sterols.</text>
</comment>
<comment type="catalytic activity">
    <reaction>
        <text>cycloeucalenol = obtusifoliol</text>
        <dbReference type="Rhea" id="RHEA:22800"/>
        <dbReference type="ChEBI" id="CHEBI:16653"/>
        <dbReference type="ChEBI" id="CHEBI:17791"/>
        <dbReference type="EC" id="5.5.1.9"/>
    </reaction>
</comment>
<comment type="subcellular location">
    <subcellularLocation>
        <location>Membrane</location>
        <topology>Multi-pass membrane protein</topology>
    </subcellularLocation>
</comment>
<comment type="alternative products">
    <event type="alternative splicing"/>
    <isoform>
        <id>Q9M643-1</id>
        <name>1</name>
        <sequence type="displayed"/>
    </isoform>
    <text>A number of isoforms are produced. According to EST sequences.</text>
</comment>
<gene>
    <name type="primary">CPI1</name>
    <name type="ordered locus">At5g50375</name>
    <name type="ORF">MXI22.9</name>
</gene>
<reference key="1">
    <citation type="journal article" date="2000" name="J. Biol. Chem.">
        <title>Functional cloning of an Arabidopsis thaliana cDNA encoding cycloeucalenol cycloisomerase.</title>
        <authorList>
            <person name="Lovato M.A."/>
            <person name="Hart E.A."/>
            <person name="Segura M.J.R."/>
            <person name="Giner J.-L."/>
            <person name="Matsuda S.P.T."/>
        </authorList>
    </citation>
    <scope>NUCLEOTIDE SEQUENCE [MRNA]</scope>
</reference>
<reference key="2">
    <citation type="journal article" date="1998" name="DNA Res.">
        <title>Structural analysis of Arabidopsis thaliana chromosome 5. VI. Sequence features of the regions of 1,367,185 bp covered by 19 physically assigned P1 and TAC clones.</title>
        <authorList>
            <person name="Kotani H."/>
            <person name="Nakamura Y."/>
            <person name="Sato S."/>
            <person name="Asamizu E."/>
            <person name="Kaneko T."/>
            <person name="Miyajima N."/>
            <person name="Tabata S."/>
        </authorList>
    </citation>
    <scope>NUCLEOTIDE SEQUENCE [LARGE SCALE GENOMIC DNA]</scope>
    <source>
        <strain>cv. Columbia</strain>
    </source>
</reference>
<reference key="3">
    <citation type="journal article" date="2017" name="Plant J.">
        <title>Araport11: a complete reannotation of the Arabidopsis thaliana reference genome.</title>
        <authorList>
            <person name="Cheng C.Y."/>
            <person name="Krishnakumar V."/>
            <person name="Chan A.P."/>
            <person name="Thibaud-Nissen F."/>
            <person name="Schobel S."/>
            <person name="Town C.D."/>
        </authorList>
    </citation>
    <scope>GENOME REANNOTATION</scope>
    <source>
        <strain>cv. Columbia</strain>
    </source>
</reference>
<accession>Q9M643</accession>
<keyword id="KW-0025">Alternative splicing</keyword>
<keyword id="KW-0413">Isomerase</keyword>
<keyword id="KW-0472">Membrane</keyword>
<keyword id="KW-1185">Reference proteome</keyword>
<keyword id="KW-0812">Transmembrane</keyword>
<keyword id="KW-1133">Transmembrane helix</keyword>
<dbReference type="EC" id="5.5.1.9"/>
<dbReference type="EMBL" id="AF216756">
    <property type="protein sequence ID" value="AAF67863.1"/>
    <property type="molecule type" value="mRNA"/>
</dbReference>
<dbReference type="EMBL" id="AB012248">
    <property type="status" value="NOT_ANNOTATED_CDS"/>
    <property type="molecule type" value="Genomic_DNA"/>
</dbReference>
<dbReference type="EMBL" id="CP002688">
    <property type="protein sequence ID" value="AED95935.1"/>
    <property type="molecule type" value="Genomic_DNA"/>
</dbReference>
<dbReference type="RefSeq" id="NP_568727.1">
    <molecule id="Q9M643-1"/>
    <property type="nucleotide sequence ID" value="NM_124419.5"/>
</dbReference>
<dbReference type="BioGRID" id="20351">
    <property type="interactions" value="6"/>
</dbReference>
<dbReference type="FunCoup" id="Q9M643">
    <property type="interactions" value="105"/>
</dbReference>
<dbReference type="STRING" id="3702.Q9M643"/>
<dbReference type="iPTMnet" id="Q9M643"/>
<dbReference type="PaxDb" id="3702-AT5G50375.2"/>
<dbReference type="ProteomicsDB" id="224380">
    <molecule id="Q9M643-1"/>
</dbReference>
<dbReference type="EnsemblPlants" id="AT5G50375.1">
    <molecule id="Q9M643-1"/>
    <property type="protein sequence ID" value="AT5G50375.1"/>
    <property type="gene ID" value="AT5G50375"/>
</dbReference>
<dbReference type="GeneID" id="835105"/>
<dbReference type="Gramene" id="AT5G50375.1">
    <molecule id="Q9M643-1"/>
    <property type="protein sequence ID" value="AT5G50375.1"/>
    <property type="gene ID" value="AT5G50375"/>
</dbReference>
<dbReference type="KEGG" id="ath:AT5G50375"/>
<dbReference type="Araport" id="AT5G50375"/>
<dbReference type="TAIR" id="AT5G50375">
    <property type="gene designation" value="CPI1"/>
</dbReference>
<dbReference type="eggNOG" id="ENOG502QPR8">
    <property type="taxonomic scope" value="Eukaryota"/>
</dbReference>
<dbReference type="HOGENOM" id="CLU_061063_0_0_1"/>
<dbReference type="InParanoid" id="Q9M643"/>
<dbReference type="OMA" id="PWYRRYW"/>
<dbReference type="OrthoDB" id="2111841at2759"/>
<dbReference type="PhylomeDB" id="Q9M643"/>
<dbReference type="BioCyc" id="ARA:AT5G50375-MONOMER"/>
<dbReference type="BioCyc" id="MetaCyc:AT5G50375-MONOMER"/>
<dbReference type="BRENDA" id="5.5.1.9">
    <property type="organism ID" value="399"/>
</dbReference>
<dbReference type="PRO" id="PR:Q9M643"/>
<dbReference type="Proteomes" id="UP000006548">
    <property type="component" value="Chromosome 5"/>
</dbReference>
<dbReference type="ExpressionAtlas" id="Q9M643">
    <property type="expression patterns" value="baseline and differential"/>
</dbReference>
<dbReference type="GO" id="GO:0016020">
    <property type="term" value="C:membrane"/>
    <property type="evidence" value="ECO:0007669"/>
    <property type="project" value="UniProtKB-SubCell"/>
</dbReference>
<dbReference type="GO" id="GO:0047793">
    <property type="term" value="F:cycloeucalenol cycloisomerase activity"/>
    <property type="evidence" value="ECO:0007669"/>
    <property type="project" value="UniProtKB-EC"/>
</dbReference>
<dbReference type="InterPro" id="IPR020532">
    <property type="entry name" value="Cycloeucalenol_cycloisomerase"/>
</dbReference>
<dbReference type="PANTHER" id="PTHR35136">
    <property type="entry name" value="CYCLOEUCALENOL CYCLOISOMERASE"/>
    <property type="match status" value="1"/>
</dbReference>
<dbReference type="PANTHER" id="PTHR35136:SF1">
    <property type="entry name" value="CYCLOEUCALENOL CYCLOISOMERASE"/>
    <property type="match status" value="1"/>
</dbReference>
<protein>
    <recommendedName>
        <fullName>Cycloeucalenol cycloisomerase</fullName>
        <ecNumber>5.5.1.9</ecNumber>
    </recommendedName>
    <alternativeName>
        <fullName>Cycloeucalenol--obtusifoliol isomerase</fullName>
    </alternativeName>
    <alternativeName>
        <fullName>Cyclopropyl sterol isomerase</fullName>
    </alternativeName>
</protein>
<proteinExistence type="evidence at transcript level"/>
<sequence>MSGSSSPSLWLAPNPSKRWGELFFLFYTPFWLTLCLGIVVPYKLYETFTELEYLLLALVSAVPAFVIPMLLVGKADRSLCWKDRYWVKANLWIIVFSYVGNYFWTHYFFKVLGASYTFPSWKMNNVPHTTFFLTHVCFLFYHVASNITLRRLRHSTADLPDSLKWCFEAAWILALSYFIAYLETIAIANFPYYEFVDRSAMYRVGCLFYAIYFIVSFPMFFRMDEKSTDEWDLSRVAVDALGAAMLVTIILDLWRLFLGPIVPLPEGQNCLQSGLPWFSN</sequence>